<reference key="1">
    <citation type="submission" date="2004-11" db="EMBL/GenBank/DDBJ databases">
        <authorList>
            <consortium name="The German cDNA consortium"/>
        </authorList>
    </citation>
    <scope>NUCLEOTIDE SEQUENCE [LARGE SCALE MRNA]</scope>
    <source>
        <tissue>Brain cortex</tissue>
    </source>
</reference>
<evidence type="ECO:0000250" key="1"/>
<evidence type="ECO:0000250" key="2">
    <source>
        <dbReference type="UniProtKB" id="Q5JSP0"/>
    </source>
</evidence>
<evidence type="ECO:0000255" key="3">
    <source>
        <dbReference type="PROSITE-ProRule" id="PRU00062"/>
    </source>
</evidence>
<evidence type="ECO:0000255" key="4">
    <source>
        <dbReference type="PROSITE-ProRule" id="PRU00091"/>
    </source>
</evidence>
<evidence type="ECO:0000255" key="5">
    <source>
        <dbReference type="PROSITE-ProRule" id="PRU00145"/>
    </source>
</evidence>
<evidence type="ECO:0000256" key="6">
    <source>
        <dbReference type="SAM" id="MobiDB-lite"/>
    </source>
</evidence>
<evidence type="ECO:0000305" key="7"/>
<comment type="function">
    <text evidence="1">Promotes the formation of filopodia. May activate CDC42, a member of the Ras-like family of Rho- and Rac proteins, by exchanging bound GDP for free GTP. Plays a role in regulating the actin cytoskeleton and cell shape (By similarity).</text>
</comment>
<comment type="subcellular location">
    <subcellularLocation>
        <location evidence="7">Cytoplasm</location>
    </subcellularLocation>
    <subcellularLocation>
        <location evidence="7">Cytoplasm</location>
        <location evidence="7">Cytoskeleton</location>
    </subcellularLocation>
</comment>
<accession>Q5R5T1</accession>
<feature type="chain" id="PRO_0000080946" description="FYVE, RhoGEF and PH domain-containing protein 3">
    <location>
        <begin position="1"/>
        <end position="737"/>
    </location>
</feature>
<feature type="domain" description="DH" evidence="3">
    <location>
        <begin position="157"/>
        <end position="341"/>
    </location>
</feature>
<feature type="domain" description="PH 1" evidence="5">
    <location>
        <begin position="370"/>
        <end position="469"/>
    </location>
</feature>
<feature type="domain" description="PH 2" evidence="5">
    <location>
        <begin position="616"/>
        <end position="715"/>
    </location>
</feature>
<feature type="zinc finger region" description="FYVE-type" evidence="4">
    <location>
        <begin position="532"/>
        <end position="588"/>
    </location>
</feature>
<feature type="region of interest" description="Disordered" evidence="6">
    <location>
        <begin position="1"/>
        <end position="151"/>
    </location>
</feature>
<feature type="region of interest" description="Disordered" evidence="6">
    <location>
        <begin position="487"/>
        <end position="533"/>
    </location>
</feature>
<feature type="region of interest" description="Disordered" evidence="6">
    <location>
        <begin position="589"/>
        <end position="620"/>
    </location>
</feature>
<feature type="region of interest" description="Disordered" evidence="6">
    <location>
        <begin position="713"/>
        <end position="737"/>
    </location>
</feature>
<feature type="compositionally biased region" description="Acidic residues" evidence="6">
    <location>
        <begin position="126"/>
        <end position="136"/>
    </location>
</feature>
<feature type="compositionally biased region" description="Low complexity" evidence="6">
    <location>
        <begin position="500"/>
        <end position="512"/>
    </location>
</feature>
<feature type="compositionally biased region" description="Basic and acidic residues" evidence="6">
    <location>
        <begin position="521"/>
        <end position="533"/>
    </location>
</feature>
<feature type="binding site" evidence="4">
    <location>
        <position position="538"/>
    </location>
    <ligand>
        <name>Zn(2+)</name>
        <dbReference type="ChEBI" id="CHEBI:29105"/>
        <label>1</label>
    </ligand>
</feature>
<feature type="binding site" evidence="4">
    <location>
        <position position="541"/>
    </location>
    <ligand>
        <name>Zn(2+)</name>
        <dbReference type="ChEBI" id="CHEBI:29105"/>
        <label>1</label>
    </ligand>
</feature>
<feature type="binding site" evidence="4">
    <location>
        <position position="555"/>
    </location>
    <ligand>
        <name>Zn(2+)</name>
        <dbReference type="ChEBI" id="CHEBI:29105"/>
        <label>2</label>
    </ligand>
</feature>
<feature type="binding site" evidence="4">
    <location>
        <position position="558"/>
    </location>
    <ligand>
        <name>Zn(2+)</name>
        <dbReference type="ChEBI" id="CHEBI:29105"/>
        <label>2</label>
    </ligand>
</feature>
<feature type="binding site" evidence="4">
    <location>
        <position position="563"/>
    </location>
    <ligand>
        <name>Zn(2+)</name>
        <dbReference type="ChEBI" id="CHEBI:29105"/>
        <label>1</label>
    </ligand>
</feature>
<feature type="binding site" evidence="4">
    <location>
        <position position="566"/>
    </location>
    <ligand>
        <name>Zn(2+)</name>
        <dbReference type="ChEBI" id="CHEBI:29105"/>
        <label>1</label>
    </ligand>
</feature>
<feature type="binding site" evidence="4">
    <location>
        <position position="580"/>
    </location>
    <ligand>
        <name>Zn(2+)</name>
        <dbReference type="ChEBI" id="CHEBI:29105"/>
        <label>2</label>
    </ligand>
</feature>
<feature type="binding site" evidence="4">
    <location>
        <position position="583"/>
    </location>
    <ligand>
        <name>Zn(2+)</name>
        <dbReference type="ChEBI" id="CHEBI:29105"/>
        <label>2</label>
    </ligand>
</feature>
<feature type="modified residue" description="Phosphoserine" evidence="2">
    <location>
        <position position="128"/>
    </location>
</feature>
<name>FGD3_PONAB</name>
<organism>
    <name type="scientific">Pongo abelii</name>
    <name type="common">Sumatran orangutan</name>
    <name type="synonym">Pongo pygmaeus abelii</name>
    <dbReference type="NCBI Taxonomy" id="9601"/>
    <lineage>
        <taxon>Eukaryota</taxon>
        <taxon>Metazoa</taxon>
        <taxon>Chordata</taxon>
        <taxon>Craniata</taxon>
        <taxon>Vertebrata</taxon>
        <taxon>Euteleostomi</taxon>
        <taxon>Mammalia</taxon>
        <taxon>Eutheria</taxon>
        <taxon>Euarchontoglires</taxon>
        <taxon>Primates</taxon>
        <taxon>Haplorrhini</taxon>
        <taxon>Catarrhini</taxon>
        <taxon>Hominidae</taxon>
        <taxon>Pongo</taxon>
    </lineage>
</organism>
<gene>
    <name type="primary">FGD3</name>
</gene>
<dbReference type="EMBL" id="CR860772">
    <property type="protein sequence ID" value="CAH92885.1"/>
    <property type="molecule type" value="mRNA"/>
</dbReference>
<dbReference type="RefSeq" id="NP_001126690.1">
    <property type="nucleotide sequence ID" value="NM_001133218.1"/>
</dbReference>
<dbReference type="BMRB" id="Q5R5T1"/>
<dbReference type="SMR" id="Q5R5T1"/>
<dbReference type="FunCoup" id="Q5R5T1">
    <property type="interactions" value="426"/>
</dbReference>
<dbReference type="STRING" id="9601.ENSPPYP00000021725"/>
<dbReference type="GeneID" id="100173690"/>
<dbReference type="KEGG" id="pon:100173690"/>
<dbReference type="CTD" id="89846"/>
<dbReference type="eggNOG" id="KOG4424">
    <property type="taxonomic scope" value="Eukaryota"/>
</dbReference>
<dbReference type="InParanoid" id="Q5R5T1"/>
<dbReference type="OrthoDB" id="660555at2759"/>
<dbReference type="Proteomes" id="UP000001595">
    <property type="component" value="Unplaced"/>
</dbReference>
<dbReference type="GO" id="GO:0005737">
    <property type="term" value="C:cytoplasm"/>
    <property type="evidence" value="ECO:0007669"/>
    <property type="project" value="UniProtKB-SubCell"/>
</dbReference>
<dbReference type="GO" id="GO:0005856">
    <property type="term" value="C:cytoskeleton"/>
    <property type="evidence" value="ECO:0007669"/>
    <property type="project" value="UniProtKB-SubCell"/>
</dbReference>
<dbReference type="GO" id="GO:0005085">
    <property type="term" value="F:guanyl-nucleotide exchange factor activity"/>
    <property type="evidence" value="ECO:0007669"/>
    <property type="project" value="UniProtKB-KW"/>
</dbReference>
<dbReference type="GO" id="GO:0008270">
    <property type="term" value="F:zinc ion binding"/>
    <property type="evidence" value="ECO:0007669"/>
    <property type="project" value="UniProtKB-KW"/>
</dbReference>
<dbReference type="GO" id="GO:0007010">
    <property type="term" value="P:cytoskeleton organization"/>
    <property type="evidence" value="ECO:0007669"/>
    <property type="project" value="TreeGrafter"/>
</dbReference>
<dbReference type="GO" id="GO:0046847">
    <property type="term" value="P:filopodium assembly"/>
    <property type="evidence" value="ECO:0007669"/>
    <property type="project" value="TreeGrafter"/>
</dbReference>
<dbReference type="CDD" id="cd15740">
    <property type="entry name" value="FYVE_FGD3"/>
    <property type="match status" value="1"/>
</dbReference>
<dbReference type="CDD" id="cd13387">
    <property type="entry name" value="PH1_FGD3"/>
    <property type="match status" value="1"/>
</dbReference>
<dbReference type="CDD" id="cd13236">
    <property type="entry name" value="PH2_FGD1-4"/>
    <property type="match status" value="1"/>
</dbReference>
<dbReference type="CDD" id="cd00160">
    <property type="entry name" value="RhoGEF"/>
    <property type="match status" value="1"/>
</dbReference>
<dbReference type="FunFam" id="2.30.29.30:FF:000389">
    <property type="entry name" value="FYVE, RhoGEF and PH domain containing 3"/>
    <property type="match status" value="1"/>
</dbReference>
<dbReference type="FunFam" id="3.30.40.10:FF:000544">
    <property type="entry name" value="FYVE, RhoGEF and PH domain containing 3"/>
    <property type="match status" value="1"/>
</dbReference>
<dbReference type="FunFam" id="2.30.29.30:FF:000401">
    <property type="entry name" value="FYVE, RhoGEF and PH domain-containing protein 3"/>
    <property type="match status" value="1"/>
</dbReference>
<dbReference type="FunFam" id="1.20.900.10:FF:000013">
    <property type="entry name" value="FYVE, RhoGEF and PH domain-containing protein 4"/>
    <property type="match status" value="1"/>
</dbReference>
<dbReference type="Gene3D" id="1.20.900.10">
    <property type="entry name" value="Dbl homology (DH) domain"/>
    <property type="match status" value="1"/>
</dbReference>
<dbReference type="Gene3D" id="2.30.29.30">
    <property type="entry name" value="Pleckstrin-homology domain (PH domain)/Phosphotyrosine-binding domain (PTB)"/>
    <property type="match status" value="2"/>
</dbReference>
<dbReference type="Gene3D" id="3.30.40.10">
    <property type="entry name" value="Zinc/RING finger domain, C3HC4 (zinc finger)"/>
    <property type="match status" value="1"/>
</dbReference>
<dbReference type="InterPro" id="IPR035899">
    <property type="entry name" value="DBL_dom_sf"/>
</dbReference>
<dbReference type="InterPro" id="IPR000219">
    <property type="entry name" value="DH_dom"/>
</dbReference>
<dbReference type="InterPro" id="IPR035941">
    <property type="entry name" value="FGD1-4_PH2"/>
</dbReference>
<dbReference type="InterPro" id="IPR051092">
    <property type="entry name" value="FYVE_RhoGEF_PH"/>
</dbReference>
<dbReference type="InterPro" id="IPR011993">
    <property type="entry name" value="PH-like_dom_sf"/>
</dbReference>
<dbReference type="InterPro" id="IPR001849">
    <property type="entry name" value="PH_domain"/>
</dbReference>
<dbReference type="InterPro" id="IPR000306">
    <property type="entry name" value="Znf_FYVE"/>
</dbReference>
<dbReference type="InterPro" id="IPR017455">
    <property type="entry name" value="Znf_FYVE-rel"/>
</dbReference>
<dbReference type="InterPro" id="IPR011011">
    <property type="entry name" value="Znf_FYVE_PHD"/>
</dbReference>
<dbReference type="InterPro" id="IPR013083">
    <property type="entry name" value="Znf_RING/FYVE/PHD"/>
</dbReference>
<dbReference type="PANTHER" id="PTHR12673">
    <property type="entry name" value="FACIOGENITAL DYSPLASIA PROTEIN"/>
    <property type="match status" value="1"/>
</dbReference>
<dbReference type="PANTHER" id="PTHR12673:SF14">
    <property type="entry name" value="FYVE, RHOGEF AND PH DOMAIN-CONTAINING PROTEIN 3"/>
    <property type="match status" value="1"/>
</dbReference>
<dbReference type="Pfam" id="PF01363">
    <property type="entry name" value="FYVE"/>
    <property type="match status" value="1"/>
</dbReference>
<dbReference type="Pfam" id="PF00169">
    <property type="entry name" value="PH"/>
    <property type="match status" value="1"/>
</dbReference>
<dbReference type="Pfam" id="PF00621">
    <property type="entry name" value="RhoGEF"/>
    <property type="match status" value="1"/>
</dbReference>
<dbReference type="SMART" id="SM00064">
    <property type="entry name" value="FYVE"/>
    <property type="match status" value="1"/>
</dbReference>
<dbReference type="SMART" id="SM00233">
    <property type="entry name" value="PH"/>
    <property type="match status" value="2"/>
</dbReference>
<dbReference type="SMART" id="SM00325">
    <property type="entry name" value="RhoGEF"/>
    <property type="match status" value="1"/>
</dbReference>
<dbReference type="SUPFAM" id="SSF48065">
    <property type="entry name" value="DBL homology domain (DH-domain)"/>
    <property type="match status" value="1"/>
</dbReference>
<dbReference type="SUPFAM" id="SSF57903">
    <property type="entry name" value="FYVE/PHD zinc finger"/>
    <property type="match status" value="1"/>
</dbReference>
<dbReference type="SUPFAM" id="SSF50729">
    <property type="entry name" value="PH domain-like"/>
    <property type="match status" value="2"/>
</dbReference>
<dbReference type="PROSITE" id="PS50010">
    <property type="entry name" value="DH_2"/>
    <property type="match status" value="1"/>
</dbReference>
<dbReference type="PROSITE" id="PS50003">
    <property type="entry name" value="PH_DOMAIN"/>
    <property type="match status" value="2"/>
</dbReference>
<dbReference type="PROSITE" id="PS50178">
    <property type="entry name" value="ZF_FYVE"/>
    <property type="match status" value="1"/>
</dbReference>
<protein>
    <recommendedName>
        <fullName>FYVE, RhoGEF and PH domain-containing protein 3</fullName>
    </recommendedName>
</protein>
<sequence length="737" mass="80555">MESGGGSSTPPGPIAALGMPDSGPGSSSLGKLQALPVGPRAHCGDPGSLAAAGDGSLDTGSTGELSGSLKIPNRDSGIDSPSSSVAGENFPCEEGLEAGPSPTVLGAHPEMALDSQVPKVTPREEADSDVGEEPDSENTPQKADKDAGLAQHSGPQKLLHIAQELLHTEETYVKRLHLLDQVFCTRLTDAGIPPEVIMGIFSNISSIHRFHGQFLLPELKTRITEEWDTNPRLGDILQKLAPFLKMYGEYVKNFDRAVGLVSTWTQRSPLFKDVVHSIQKQEVCGNLTLQHHMLEPVQRVPRYELLLKDYLKRLPQDAPDQKDAERSLELISTAANHSNAAIRKVEKMHKLLEVYEQLGGEEDIANPANELIKEGQIQKLSAKNGTPQDRHLFLFNSMILYCVPKLRLMGQKFSVREKMDISGLQVQDIVKPNTAHTFIITGRKRSLELQTRTEEEKKEWIQIIQATIEKHKQNSETFKAFGGAFSQDEDPSLSPDMPITSTSPVEPVVTTEGGSGAAGLEPRKLSSKTRRDKEKQSCKSCGETFNSITKRRHHCKLCGVVICGKCSEFKAENSRQSRVCRECFLTQPVAPESPSPEAPAKPRRSTEKTPTADPQPSLLCGPLRLSESGETWSEVWAAIPMSDPQVLHLQGGSQDGWLPRTIPLPSCKLSVPDPEERLDSGHVWKLQWAKQSWYLSASSAELQQRWLETLSTAARGDTAQDSPGALQPQVPTGAAAP</sequence>
<keyword id="KW-0963">Cytoplasm</keyword>
<keyword id="KW-0206">Cytoskeleton</keyword>
<keyword id="KW-0344">Guanine-nucleotide releasing factor</keyword>
<keyword id="KW-0479">Metal-binding</keyword>
<keyword id="KW-0597">Phosphoprotein</keyword>
<keyword id="KW-1185">Reference proteome</keyword>
<keyword id="KW-0677">Repeat</keyword>
<keyword id="KW-0862">Zinc</keyword>
<keyword id="KW-0863">Zinc-finger</keyword>
<proteinExistence type="evidence at transcript level"/>